<comment type="function">
    <text evidence="2">Tubulin is the major constituent of microtubules, protein filaments consisting of alpha- and beta-tubulin heterodimers (By similarity). Microtubules grow by the addition of GTP-tubulin dimers to the microtubule end, where a stabilizing cap forms (By similarity). Below the cap, tubulin dimers are in GDP-bound state, owing to GTPase activity of alpha-tubulin (By similarity).</text>
</comment>
<comment type="catalytic activity">
    <reaction evidence="2">
        <text>GTP + H2O = GDP + phosphate + H(+)</text>
        <dbReference type="Rhea" id="RHEA:19669"/>
        <dbReference type="ChEBI" id="CHEBI:15377"/>
        <dbReference type="ChEBI" id="CHEBI:15378"/>
        <dbReference type="ChEBI" id="CHEBI:37565"/>
        <dbReference type="ChEBI" id="CHEBI:43474"/>
        <dbReference type="ChEBI" id="CHEBI:58189"/>
    </reaction>
    <physiologicalReaction direction="left-to-right" evidence="2">
        <dbReference type="Rhea" id="RHEA:19670"/>
    </physiologicalReaction>
</comment>
<comment type="cofactor">
    <cofactor evidence="2">
        <name>Mg(2+)</name>
        <dbReference type="ChEBI" id="CHEBI:18420"/>
    </cofactor>
</comment>
<comment type="subunit">
    <text evidence="2 3">Heterodimer of alpha- and beta-tubulin (By similarity). A typical microtubule is a hollow water-filled tube with an outer diameter of 25 nm and an inner diameter of 15 nM (By similarity). Alpha-beta heterodimers associate head-to-tail to form protofilaments running lengthwise along the microtubule wall with the beta-tubulin subunit facing the microtubule plus end conferring a structural polarity (By similarity). Microtubules usually have 13 protofilaments but different protofilament numbers can be found in some organisms and specialized cells (By similarity). Interacts with gamma-tubulin; the interaction allows microtubules to nucleate from the gamma-tubulin ring complex (gTuRC) (By similarity). Nascent microtubule interacts (via alpha-tubulin MREC motif) with TTC5/STRAP; this interaction may result in tubulin mRNA-targeted degradation (By similarity). Component of sperm flagellar doublet microtubules (By similarity).</text>
</comment>
<comment type="subcellular location">
    <subcellularLocation>
        <location>Cytoplasm</location>
        <location>Cytoskeleton</location>
    </subcellularLocation>
    <subcellularLocation>
        <location evidence="3">Cytoplasm</location>
        <location evidence="3">Cytoskeleton</location>
        <location evidence="3">Flagellum axoneme</location>
    </subcellularLocation>
</comment>
<comment type="PTM">
    <text evidence="3">Some glutamate residues at the C-terminus are polyglycylated, resulting in polyglycine chains on the gamma-carboxyl group. Glycylation is mainly limited to tubulin incorporated into axonemes (cilia and flagella) whereas glutamylation is prevalent in neuronal cells, centrioles, axonemes, and the mitotic spindle. Both modifications can coexist on the same protein on adjacent residues, and lowering polyglycylation levels increases polyglutamylation, and reciprocally. Cilia and flagella glycylation is required for their stability and maintenance. Flagella glycylation controls sperm motility.</text>
</comment>
<comment type="PTM">
    <text evidence="3 5">Some glutamate residues at the C-terminus are polyglutamylated, resulting in polyglutamate chains on the gamma-carboxyl group (By similarity). Polyglutamylation plays a key role in microtubule severing by spastin (SPAST). SPAST preferentially recognizes and acts on microtubules decorated with short polyglutamate tails: severing activity by SPAST increases as the number of glutamates per tubulin rises from one to eight, but decreases beyond this glutamylation threshold (By similarity). Glutamylation is also involved in cilia motility (By similarity).</text>
</comment>
<comment type="PTM">
    <text evidence="5">Acetylation of alpha chains at Lys-40 is located inside the microtubule lumen. This modification has been correlated with increased microtubule stability, intracellular transport and ciliary assembly.</text>
</comment>
<comment type="PTM">
    <text evidence="2">Methylation of alpha chains at Lys-40 is found in mitotic microtubules and is required for normal mitosis and cytokinesis contributing to genomic stability.</text>
</comment>
<comment type="PTM">
    <text evidence="5">Nitration of Tyr-451 is irreversible and interferes with normal dynein intracellular distribution.</text>
</comment>
<comment type="PTM">
    <text evidence="3 5">Undergoes a tyrosination/detyrosination cycle, the cyclic removal and re-addition of a C-terminal tyrosine residue by the enzymes tubulin tyrosine carboxypeptidase (MATCAP1, VASH1 or VASH2) and tubulin tyrosine ligase (TTL), respectively.</text>
</comment>
<comment type="PTM">
    <molecule>Tubulin alpha-1A chain</molecule>
    <text evidence="3 5">Tyrosination promotes microtubule interaction with CAP-Gly domain-containing proteins such as CLIP1, CLIP2 and DCTN1 (By similarity). Tyrosination regulates the initiation of dynein-dynactin motility via interaction with DCTN1, which brings the dynein-dynactin complex into contact with microtubules. In neurons, tyrosinated tubulins mediate the initiation of retrograde vesicle transport (By similarity).</text>
</comment>
<comment type="PTM">
    <molecule>Detyrosinated tubulin alpha-1A chain</molecule>
    <text evidence="3 5">Detyrosination is involved in metaphase plate congression by guiding chromosomes during mitosis: detyrosination promotes interaction with CENPE, promoting pole-proximal transport of chromosomes toward the equator (By similarity). Detyrosination increases microtubules-dependent mechanotransduction in dystrophic cardiac and skeletal muscle. In cardiomyocytes, detyrosinated microtubules are required to resist to contractile compression during contraction: detyrosination promotes association with desmin (DES) at force-generating sarcomeres, leading to buckled microtubules and mechanical resistance to contraction (By similarity).</text>
</comment>
<comment type="similarity">
    <text evidence="7">Belongs to the tubulin family.</text>
</comment>
<organism>
    <name type="scientific">Cricetulus griseus</name>
    <name type="common">Chinese hamster</name>
    <name type="synonym">Cricetulus barabensis griseus</name>
    <dbReference type="NCBI Taxonomy" id="10029"/>
    <lineage>
        <taxon>Eukaryota</taxon>
        <taxon>Metazoa</taxon>
        <taxon>Chordata</taxon>
        <taxon>Craniata</taxon>
        <taxon>Vertebrata</taxon>
        <taxon>Euteleostomi</taxon>
        <taxon>Mammalia</taxon>
        <taxon>Eutheria</taxon>
        <taxon>Euarchontoglires</taxon>
        <taxon>Glires</taxon>
        <taxon>Rodentia</taxon>
        <taxon>Myomorpha</taxon>
        <taxon>Muroidea</taxon>
        <taxon>Cricetidae</taxon>
        <taxon>Cricetinae</taxon>
        <taxon>Cricetulus</taxon>
    </lineage>
</organism>
<feature type="chain" id="PRO_0000048117" description="Tubulin alpha-1A chain">
    <location>
        <begin position="1"/>
        <end position="451"/>
    </location>
</feature>
<feature type="chain" id="PRO_0000437377" description="Detyrosinated tubulin alpha-1A chain" evidence="5">
    <location>
        <begin position="1"/>
        <end position="450"/>
    </location>
</feature>
<feature type="region of interest" description="Disordered" evidence="6">
    <location>
        <begin position="432"/>
        <end position="451"/>
    </location>
</feature>
<feature type="active site" evidence="2">
    <location>
        <position position="254"/>
    </location>
</feature>
<feature type="binding site" evidence="2">
    <location>
        <position position="10"/>
    </location>
    <ligand>
        <name>GTP</name>
        <dbReference type="ChEBI" id="CHEBI:37565"/>
    </ligand>
</feature>
<feature type="binding site" evidence="2">
    <location>
        <position position="11"/>
    </location>
    <ligand>
        <name>GTP</name>
        <dbReference type="ChEBI" id="CHEBI:37565"/>
    </ligand>
</feature>
<feature type="binding site" evidence="2">
    <location>
        <position position="12"/>
    </location>
    <ligand>
        <name>GTP</name>
        <dbReference type="ChEBI" id="CHEBI:37565"/>
    </ligand>
</feature>
<feature type="binding site" evidence="2">
    <location>
        <position position="15"/>
    </location>
    <ligand>
        <name>GTP</name>
        <dbReference type="ChEBI" id="CHEBI:37565"/>
    </ligand>
</feature>
<feature type="binding site" evidence="2">
    <location>
        <position position="71"/>
    </location>
    <ligand>
        <name>GTP</name>
        <dbReference type="ChEBI" id="CHEBI:37565"/>
    </ligand>
</feature>
<feature type="binding site" evidence="2">
    <location>
        <position position="71"/>
    </location>
    <ligand>
        <name>Mg(2+)</name>
        <dbReference type="ChEBI" id="CHEBI:18420"/>
    </ligand>
</feature>
<feature type="binding site" evidence="2">
    <location>
        <position position="99"/>
    </location>
    <ligand>
        <name>GTP</name>
        <dbReference type="ChEBI" id="CHEBI:37565"/>
    </ligand>
</feature>
<feature type="binding site" evidence="2">
    <location>
        <position position="140"/>
    </location>
    <ligand>
        <name>GTP</name>
        <dbReference type="ChEBI" id="CHEBI:37565"/>
    </ligand>
</feature>
<feature type="binding site" evidence="2">
    <location>
        <position position="143"/>
    </location>
    <ligand>
        <name>GTP</name>
        <dbReference type="ChEBI" id="CHEBI:37565"/>
    </ligand>
</feature>
<feature type="binding site" evidence="2">
    <location>
        <position position="144"/>
    </location>
    <ligand>
        <name>GTP</name>
        <dbReference type="ChEBI" id="CHEBI:37565"/>
    </ligand>
</feature>
<feature type="binding site" evidence="2">
    <location>
        <position position="145"/>
    </location>
    <ligand>
        <name>GTP</name>
        <dbReference type="ChEBI" id="CHEBI:37565"/>
    </ligand>
</feature>
<feature type="binding site" evidence="2">
    <location>
        <position position="146"/>
    </location>
    <ligand>
        <name>GTP</name>
        <dbReference type="ChEBI" id="CHEBI:37565"/>
    </ligand>
</feature>
<feature type="binding site" evidence="2">
    <location>
        <position position="179"/>
    </location>
    <ligand>
        <name>GTP</name>
        <dbReference type="ChEBI" id="CHEBI:37565"/>
    </ligand>
</feature>
<feature type="binding site" evidence="2">
    <location>
        <position position="183"/>
    </location>
    <ligand>
        <name>GTP</name>
        <dbReference type="ChEBI" id="CHEBI:37565"/>
    </ligand>
</feature>
<feature type="binding site" evidence="2">
    <location>
        <position position="206"/>
    </location>
    <ligand>
        <name>GTP</name>
        <dbReference type="ChEBI" id="CHEBI:37565"/>
    </ligand>
</feature>
<feature type="binding site" evidence="2">
    <location>
        <position position="224"/>
    </location>
    <ligand>
        <name>GTP</name>
        <dbReference type="ChEBI" id="CHEBI:37565"/>
    </ligand>
</feature>
<feature type="binding site" evidence="2">
    <location>
        <position position="228"/>
    </location>
    <ligand>
        <name>GTP</name>
        <dbReference type="ChEBI" id="CHEBI:37565"/>
    </ligand>
</feature>
<feature type="binding site" evidence="2">
    <location>
        <position position="252"/>
    </location>
    <ligand>
        <name>GTP</name>
        <dbReference type="ChEBI" id="CHEBI:37565"/>
    </ligand>
</feature>
<feature type="site" description="Involved in polymerization" evidence="1">
    <location>
        <position position="451"/>
    </location>
</feature>
<feature type="modified residue" description="N6-acetyllysine" evidence="5">
    <location>
        <position position="40"/>
    </location>
</feature>
<feature type="modified residue" description="3'-nitrotyrosine" evidence="4">
    <location>
        <position position="282"/>
    </location>
</feature>
<feature type="modified residue" description="Phosphoserine" evidence="4">
    <location>
        <position position="439"/>
    </location>
</feature>
<feature type="modified residue" description="5-glutamyl polyglutamate" evidence="5">
    <location>
        <position position="443"/>
    </location>
</feature>
<feature type="modified residue" description="5-glutamyl polyglutamate" evidence="3">
    <location>
        <position position="445"/>
    </location>
</feature>
<feature type="modified residue" description="3'-nitrotyrosine" evidence="5">
    <location>
        <position position="451"/>
    </location>
</feature>
<name>TBA1A_CRIGR</name>
<gene>
    <name type="primary">TUBA1A</name>
    <name type="synonym">TUBA2</name>
</gene>
<accession>P68362</accession>
<accession>P02551</accession>
<accession>P05210</accession>
<accession>P05212</accession>
<sequence length="451" mass="50136">MRECISIHVGQAGVQIGNACWELYCLEHGIQPDGQMPSDKTIGGGDDSFNTFFSETGAGKHVPRAVFVDLEPTVIDEVRTGTYRQLFHPEQLITGKEDAANNYARGHYTIGKEIIDLVLDRIRKLADQCTGLQGFLVFHSFGGGTGSGFTSLLMERLSVDYGKKSKLEFSIYPAPQVSTAVVEPYNSILTTHTTLEHSDCAFMVDNEAIYDICRRNLDIERPTYTNLNRLIGQIVSSITASLRFDGALNVDLTEFQTNLVPYPRIHFPLATYAPVISAEKAYHEQLSVAEITNACFEPANQMVKCDPRHGKYMACCLLYRGDVVPKDVNAAIATIKTKRTIQFVDWCPTGFKVGINYQPPTVVPGGDLAKVQRAVCMLSNTTAIAEAWARLDHKFDLMYAKRAFVHWYVGEGMEEGEFSEAREDMAALEKDYEEVGVDSVEGEGEEEGEEY</sequence>
<proteinExistence type="evidence at transcript level"/>
<dbReference type="EC" id="3.6.5.-" evidence="2"/>
<dbReference type="EMBL" id="M12253">
    <property type="protein sequence ID" value="AAA37025.1"/>
    <property type="molecule type" value="mRNA"/>
</dbReference>
<dbReference type="PIR" id="B24903">
    <property type="entry name" value="B24903"/>
</dbReference>
<dbReference type="PIR" id="C24903">
    <property type="entry name" value="C24903"/>
</dbReference>
<dbReference type="RefSeq" id="NP_001230907.1">
    <property type="nucleotide sequence ID" value="NM_001243978.1"/>
</dbReference>
<dbReference type="SMR" id="P68362"/>
<dbReference type="IntAct" id="P68362">
    <property type="interactions" value="1"/>
</dbReference>
<dbReference type="PaxDb" id="10029-NP_001230907.1"/>
<dbReference type="GeneID" id="100682527"/>
<dbReference type="KEGG" id="cge:100682527"/>
<dbReference type="CTD" id="7846"/>
<dbReference type="eggNOG" id="KOG1376">
    <property type="taxonomic scope" value="Eukaryota"/>
</dbReference>
<dbReference type="OrthoDB" id="1844at2759"/>
<dbReference type="Proteomes" id="UP000694386">
    <property type="component" value="Unplaced"/>
</dbReference>
<dbReference type="Proteomes" id="UP001108280">
    <property type="component" value="Chromosome 2"/>
</dbReference>
<dbReference type="GO" id="GO:0005737">
    <property type="term" value="C:cytoplasm"/>
    <property type="evidence" value="ECO:0007669"/>
    <property type="project" value="UniProtKB-KW"/>
</dbReference>
<dbReference type="GO" id="GO:0005874">
    <property type="term" value="C:microtubule"/>
    <property type="evidence" value="ECO:0007669"/>
    <property type="project" value="UniProtKB-KW"/>
</dbReference>
<dbReference type="GO" id="GO:0031514">
    <property type="term" value="C:motile cilium"/>
    <property type="evidence" value="ECO:0007669"/>
    <property type="project" value="UniProtKB-KW"/>
</dbReference>
<dbReference type="GO" id="GO:0005525">
    <property type="term" value="F:GTP binding"/>
    <property type="evidence" value="ECO:0007669"/>
    <property type="project" value="UniProtKB-KW"/>
</dbReference>
<dbReference type="GO" id="GO:0016787">
    <property type="term" value="F:hydrolase activity"/>
    <property type="evidence" value="ECO:0007669"/>
    <property type="project" value="UniProtKB-KW"/>
</dbReference>
<dbReference type="GO" id="GO:0046872">
    <property type="term" value="F:metal ion binding"/>
    <property type="evidence" value="ECO:0007669"/>
    <property type="project" value="UniProtKB-KW"/>
</dbReference>
<dbReference type="GO" id="GO:0005200">
    <property type="term" value="F:structural constituent of cytoskeleton"/>
    <property type="evidence" value="ECO:0007669"/>
    <property type="project" value="InterPro"/>
</dbReference>
<dbReference type="GO" id="GO:0007017">
    <property type="term" value="P:microtubule-based process"/>
    <property type="evidence" value="ECO:0007669"/>
    <property type="project" value="InterPro"/>
</dbReference>
<dbReference type="CDD" id="cd02186">
    <property type="entry name" value="alpha_tubulin"/>
    <property type="match status" value="1"/>
</dbReference>
<dbReference type="FunFam" id="1.10.287.600:FF:000005">
    <property type="entry name" value="Tubulin alpha chain"/>
    <property type="match status" value="1"/>
</dbReference>
<dbReference type="FunFam" id="3.30.1330.20:FF:000001">
    <property type="entry name" value="Tubulin alpha chain"/>
    <property type="match status" value="1"/>
</dbReference>
<dbReference type="FunFam" id="3.40.50.1440:FF:000002">
    <property type="entry name" value="Tubulin alpha chain"/>
    <property type="match status" value="1"/>
</dbReference>
<dbReference type="Gene3D" id="1.10.287.600">
    <property type="entry name" value="Helix hairpin bin"/>
    <property type="match status" value="1"/>
</dbReference>
<dbReference type="Gene3D" id="3.30.1330.20">
    <property type="entry name" value="Tubulin/FtsZ, C-terminal domain"/>
    <property type="match status" value="1"/>
</dbReference>
<dbReference type="Gene3D" id="3.40.50.1440">
    <property type="entry name" value="Tubulin/FtsZ, GTPase domain"/>
    <property type="match status" value="1"/>
</dbReference>
<dbReference type="InterPro" id="IPR002452">
    <property type="entry name" value="Alpha_tubulin"/>
</dbReference>
<dbReference type="InterPro" id="IPR008280">
    <property type="entry name" value="Tub_FtsZ_C"/>
</dbReference>
<dbReference type="InterPro" id="IPR000217">
    <property type="entry name" value="Tubulin"/>
</dbReference>
<dbReference type="InterPro" id="IPR037103">
    <property type="entry name" value="Tubulin/FtsZ-like_C"/>
</dbReference>
<dbReference type="InterPro" id="IPR018316">
    <property type="entry name" value="Tubulin/FtsZ_2-layer-sand-dom"/>
</dbReference>
<dbReference type="InterPro" id="IPR036525">
    <property type="entry name" value="Tubulin/FtsZ_GTPase_sf"/>
</dbReference>
<dbReference type="InterPro" id="IPR023123">
    <property type="entry name" value="Tubulin_C"/>
</dbReference>
<dbReference type="InterPro" id="IPR017975">
    <property type="entry name" value="Tubulin_CS"/>
</dbReference>
<dbReference type="InterPro" id="IPR003008">
    <property type="entry name" value="Tubulin_FtsZ_GTPase"/>
</dbReference>
<dbReference type="PANTHER" id="PTHR11588">
    <property type="entry name" value="TUBULIN"/>
    <property type="match status" value="1"/>
</dbReference>
<dbReference type="Pfam" id="PF00091">
    <property type="entry name" value="Tubulin"/>
    <property type="match status" value="1"/>
</dbReference>
<dbReference type="Pfam" id="PF03953">
    <property type="entry name" value="Tubulin_C"/>
    <property type="match status" value="1"/>
</dbReference>
<dbReference type="PRINTS" id="PR01162">
    <property type="entry name" value="ALPHATUBULIN"/>
</dbReference>
<dbReference type="PRINTS" id="PR01161">
    <property type="entry name" value="TUBULIN"/>
</dbReference>
<dbReference type="SMART" id="SM00864">
    <property type="entry name" value="Tubulin"/>
    <property type="match status" value="1"/>
</dbReference>
<dbReference type="SMART" id="SM00865">
    <property type="entry name" value="Tubulin_C"/>
    <property type="match status" value="1"/>
</dbReference>
<dbReference type="SUPFAM" id="SSF55307">
    <property type="entry name" value="Tubulin C-terminal domain-like"/>
    <property type="match status" value="1"/>
</dbReference>
<dbReference type="SUPFAM" id="SSF52490">
    <property type="entry name" value="Tubulin nucleotide-binding domain-like"/>
    <property type="match status" value="1"/>
</dbReference>
<dbReference type="PROSITE" id="PS00227">
    <property type="entry name" value="TUBULIN"/>
    <property type="match status" value="1"/>
</dbReference>
<evidence type="ECO:0000250" key="1"/>
<evidence type="ECO:0000250" key="2">
    <source>
        <dbReference type="UniProtKB" id="P68363"/>
    </source>
</evidence>
<evidence type="ECO:0000250" key="3">
    <source>
        <dbReference type="UniProtKB" id="P68369"/>
    </source>
</evidence>
<evidence type="ECO:0000250" key="4">
    <source>
        <dbReference type="UniProtKB" id="P68373"/>
    </source>
</evidence>
<evidence type="ECO:0000250" key="5">
    <source>
        <dbReference type="UniProtKB" id="Q71U36"/>
    </source>
</evidence>
<evidence type="ECO:0000256" key="6">
    <source>
        <dbReference type="SAM" id="MobiDB-lite"/>
    </source>
</evidence>
<evidence type="ECO:0000305" key="7"/>
<protein>
    <recommendedName>
        <fullName>Tubulin alpha-1A chain</fullName>
        <ecNumber evidence="2">3.6.5.-</ecNumber>
    </recommendedName>
    <alternativeName>
        <fullName>Alpha-tubulin 2</fullName>
    </alternativeName>
    <alternativeName>
        <fullName>Alpha-tubulin II</fullName>
    </alternativeName>
    <alternativeName>
        <fullName>Tubulin alpha-2 chain</fullName>
    </alternativeName>
    <component>
        <recommendedName>
            <fullName>Detyrosinated tubulin alpha-1A chain</fullName>
        </recommendedName>
    </component>
</protein>
<reference key="1">
    <citation type="journal article" date="1986" name="Mol. Cell. Biol.">
        <title>Complete sequence of three alpha-tubulin cDNAs in Chinese hamster ovary cells: each encodes a distinct alpha-tubulin isoprotein.</title>
        <authorList>
            <person name="Elliott E.M."/>
            <person name="Henderson G."/>
            <person name="Sarangi F."/>
            <person name="Ling V."/>
        </authorList>
    </citation>
    <scope>NUCLEOTIDE SEQUENCE [MRNA]</scope>
</reference>
<keyword id="KW-0007">Acetylation</keyword>
<keyword id="KW-0966">Cell projection</keyword>
<keyword id="KW-0969">Cilium</keyword>
<keyword id="KW-0963">Cytoplasm</keyword>
<keyword id="KW-0206">Cytoskeleton</keyword>
<keyword id="KW-0282">Flagellum</keyword>
<keyword id="KW-0342">GTP-binding</keyword>
<keyword id="KW-0378">Hydrolase</keyword>
<keyword id="KW-1017">Isopeptide bond</keyword>
<keyword id="KW-0460">Magnesium</keyword>
<keyword id="KW-0479">Metal-binding</keyword>
<keyword id="KW-0488">Methylation</keyword>
<keyword id="KW-0493">Microtubule</keyword>
<keyword id="KW-0944">Nitration</keyword>
<keyword id="KW-0547">Nucleotide-binding</keyword>
<keyword id="KW-0597">Phosphoprotein</keyword>